<organism>
    <name type="scientific">Magnetococcus marinus (strain ATCC BAA-1437 / JCM 17883 / MC-1)</name>
    <dbReference type="NCBI Taxonomy" id="156889"/>
    <lineage>
        <taxon>Bacteria</taxon>
        <taxon>Pseudomonadati</taxon>
        <taxon>Pseudomonadota</taxon>
        <taxon>Alphaproteobacteria</taxon>
        <taxon>Magnetococcales</taxon>
        <taxon>Magnetococcaceae</taxon>
        <taxon>Magnetococcus</taxon>
    </lineage>
</organism>
<gene>
    <name evidence="1" type="primary">glyA</name>
    <name type="ordered locus">Mmc1_0169</name>
</gene>
<evidence type="ECO:0000255" key="1">
    <source>
        <dbReference type="HAMAP-Rule" id="MF_00051"/>
    </source>
</evidence>
<feature type="chain" id="PRO_0000369934" description="Serine hydroxymethyltransferase">
    <location>
        <begin position="1"/>
        <end position="422"/>
    </location>
</feature>
<feature type="binding site" evidence="1">
    <location>
        <position position="119"/>
    </location>
    <ligand>
        <name>(6S)-5,6,7,8-tetrahydrofolate</name>
        <dbReference type="ChEBI" id="CHEBI:57453"/>
    </ligand>
</feature>
<feature type="binding site" evidence="1">
    <location>
        <begin position="123"/>
        <end position="125"/>
    </location>
    <ligand>
        <name>(6S)-5,6,7,8-tetrahydrofolate</name>
        <dbReference type="ChEBI" id="CHEBI:57453"/>
    </ligand>
</feature>
<feature type="binding site" evidence="1">
    <location>
        <position position="244"/>
    </location>
    <ligand>
        <name>(6S)-5,6,7,8-tetrahydrofolate</name>
        <dbReference type="ChEBI" id="CHEBI:57453"/>
    </ligand>
</feature>
<feature type="binding site" evidence="1">
    <location>
        <begin position="352"/>
        <end position="354"/>
    </location>
    <ligand>
        <name>(6S)-5,6,7,8-tetrahydrofolate</name>
        <dbReference type="ChEBI" id="CHEBI:57453"/>
    </ligand>
</feature>
<feature type="site" description="Plays an important role in substrate specificity" evidence="1">
    <location>
        <position position="227"/>
    </location>
</feature>
<feature type="modified residue" description="N6-(pyridoxal phosphate)lysine" evidence="1">
    <location>
        <position position="228"/>
    </location>
</feature>
<protein>
    <recommendedName>
        <fullName evidence="1">Serine hydroxymethyltransferase</fullName>
        <shortName evidence="1">SHMT</shortName>
        <shortName evidence="1">Serine methylase</shortName>
        <ecNumber evidence="1">2.1.2.1</ecNumber>
    </recommendedName>
</protein>
<comment type="function">
    <text evidence="1">Catalyzes the reversible interconversion of serine and glycine with tetrahydrofolate (THF) serving as the one-carbon carrier. This reaction serves as the major source of one-carbon groups required for the biosynthesis of purines, thymidylate, methionine, and other important biomolecules. Also exhibits THF-independent aldolase activity toward beta-hydroxyamino acids, producing glycine and aldehydes, via a retro-aldol mechanism.</text>
</comment>
<comment type="catalytic activity">
    <reaction evidence="1">
        <text>(6R)-5,10-methylene-5,6,7,8-tetrahydrofolate + glycine + H2O = (6S)-5,6,7,8-tetrahydrofolate + L-serine</text>
        <dbReference type="Rhea" id="RHEA:15481"/>
        <dbReference type="ChEBI" id="CHEBI:15377"/>
        <dbReference type="ChEBI" id="CHEBI:15636"/>
        <dbReference type="ChEBI" id="CHEBI:33384"/>
        <dbReference type="ChEBI" id="CHEBI:57305"/>
        <dbReference type="ChEBI" id="CHEBI:57453"/>
        <dbReference type="EC" id="2.1.2.1"/>
    </reaction>
</comment>
<comment type="cofactor">
    <cofactor evidence="1">
        <name>pyridoxal 5'-phosphate</name>
        <dbReference type="ChEBI" id="CHEBI:597326"/>
    </cofactor>
</comment>
<comment type="pathway">
    <text evidence="1">One-carbon metabolism; tetrahydrofolate interconversion.</text>
</comment>
<comment type="pathway">
    <text evidence="1">Amino-acid biosynthesis; glycine biosynthesis; glycine from L-serine: step 1/1.</text>
</comment>
<comment type="subunit">
    <text evidence="1">Homodimer.</text>
</comment>
<comment type="subcellular location">
    <subcellularLocation>
        <location evidence="1">Cytoplasm</location>
    </subcellularLocation>
</comment>
<comment type="similarity">
    <text evidence="1">Belongs to the SHMT family.</text>
</comment>
<keyword id="KW-0028">Amino-acid biosynthesis</keyword>
<keyword id="KW-0963">Cytoplasm</keyword>
<keyword id="KW-0554">One-carbon metabolism</keyword>
<keyword id="KW-0663">Pyridoxal phosphate</keyword>
<keyword id="KW-1185">Reference proteome</keyword>
<keyword id="KW-0808">Transferase</keyword>
<proteinExistence type="inferred from homology"/>
<name>GLYA_MAGMM</name>
<reference key="1">
    <citation type="journal article" date="2009" name="Appl. Environ. Microbiol.">
        <title>Complete genome sequence of the chemolithoautotrophic marine magnetotactic coccus strain MC-1.</title>
        <authorList>
            <person name="Schubbe S."/>
            <person name="Williams T.J."/>
            <person name="Xie G."/>
            <person name="Kiss H.E."/>
            <person name="Brettin T.S."/>
            <person name="Martinez D."/>
            <person name="Ross C.A."/>
            <person name="Schuler D."/>
            <person name="Cox B.L."/>
            <person name="Nealson K.H."/>
            <person name="Bazylinski D.A."/>
        </authorList>
    </citation>
    <scope>NUCLEOTIDE SEQUENCE [LARGE SCALE GENOMIC DNA]</scope>
    <source>
        <strain>ATCC BAA-1437 / JCM 17883 / MC-1</strain>
    </source>
</reference>
<dbReference type="EC" id="2.1.2.1" evidence="1"/>
<dbReference type="EMBL" id="CP000471">
    <property type="protein sequence ID" value="ABK42696.1"/>
    <property type="molecule type" value="Genomic_DNA"/>
</dbReference>
<dbReference type="RefSeq" id="WP_011711869.1">
    <property type="nucleotide sequence ID" value="NC_008576.1"/>
</dbReference>
<dbReference type="SMR" id="A0L403"/>
<dbReference type="STRING" id="156889.Mmc1_0169"/>
<dbReference type="KEGG" id="mgm:Mmc1_0169"/>
<dbReference type="eggNOG" id="COG0112">
    <property type="taxonomic scope" value="Bacteria"/>
</dbReference>
<dbReference type="HOGENOM" id="CLU_022477_2_0_5"/>
<dbReference type="OrthoDB" id="9803846at2"/>
<dbReference type="UniPathway" id="UPA00193"/>
<dbReference type="UniPathway" id="UPA00288">
    <property type="reaction ID" value="UER01023"/>
</dbReference>
<dbReference type="Proteomes" id="UP000002586">
    <property type="component" value="Chromosome"/>
</dbReference>
<dbReference type="GO" id="GO:0005829">
    <property type="term" value="C:cytosol"/>
    <property type="evidence" value="ECO:0007669"/>
    <property type="project" value="TreeGrafter"/>
</dbReference>
<dbReference type="GO" id="GO:0004372">
    <property type="term" value="F:glycine hydroxymethyltransferase activity"/>
    <property type="evidence" value="ECO:0007669"/>
    <property type="project" value="UniProtKB-UniRule"/>
</dbReference>
<dbReference type="GO" id="GO:0030170">
    <property type="term" value="F:pyridoxal phosphate binding"/>
    <property type="evidence" value="ECO:0007669"/>
    <property type="project" value="UniProtKB-UniRule"/>
</dbReference>
<dbReference type="GO" id="GO:0019264">
    <property type="term" value="P:glycine biosynthetic process from serine"/>
    <property type="evidence" value="ECO:0007669"/>
    <property type="project" value="UniProtKB-UniRule"/>
</dbReference>
<dbReference type="GO" id="GO:0035999">
    <property type="term" value="P:tetrahydrofolate interconversion"/>
    <property type="evidence" value="ECO:0007669"/>
    <property type="project" value="UniProtKB-UniRule"/>
</dbReference>
<dbReference type="CDD" id="cd00378">
    <property type="entry name" value="SHMT"/>
    <property type="match status" value="1"/>
</dbReference>
<dbReference type="FunFam" id="3.40.640.10:FF:000001">
    <property type="entry name" value="Serine hydroxymethyltransferase"/>
    <property type="match status" value="1"/>
</dbReference>
<dbReference type="Gene3D" id="3.90.1150.10">
    <property type="entry name" value="Aspartate Aminotransferase, domain 1"/>
    <property type="match status" value="1"/>
</dbReference>
<dbReference type="Gene3D" id="3.40.640.10">
    <property type="entry name" value="Type I PLP-dependent aspartate aminotransferase-like (Major domain)"/>
    <property type="match status" value="1"/>
</dbReference>
<dbReference type="HAMAP" id="MF_00051">
    <property type="entry name" value="SHMT"/>
    <property type="match status" value="1"/>
</dbReference>
<dbReference type="InterPro" id="IPR015424">
    <property type="entry name" value="PyrdxlP-dep_Trfase"/>
</dbReference>
<dbReference type="InterPro" id="IPR015421">
    <property type="entry name" value="PyrdxlP-dep_Trfase_major"/>
</dbReference>
<dbReference type="InterPro" id="IPR015422">
    <property type="entry name" value="PyrdxlP-dep_Trfase_small"/>
</dbReference>
<dbReference type="InterPro" id="IPR001085">
    <property type="entry name" value="Ser_HO-MeTrfase"/>
</dbReference>
<dbReference type="InterPro" id="IPR049943">
    <property type="entry name" value="Ser_HO-MeTrfase-like"/>
</dbReference>
<dbReference type="InterPro" id="IPR019798">
    <property type="entry name" value="Ser_HO-MeTrfase_PLP_BS"/>
</dbReference>
<dbReference type="InterPro" id="IPR039429">
    <property type="entry name" value="SHMT-like_dom"/>
</dbReference>
<dbReference type="NCBIfam" id="NF000586">
    <property type="entry name" value="PRK00011.1"/>
    <property type="match status" value="1"/>
</dbReference>
<dbReference type="PANTHER" id="PTHR11680">
    <property type="entry name" value="SERINE HYDROXYMETHYLTRANSFERASE"/>
    <property type="match status" value="1"/>
</dbReference>
<dbReference type="PANTHER" id="PTHR11680:SF35">
    <property type="entry name" value="SERINE HYDROXYMETHYLTRANSFERASE 1"/>
    <property type="match status" value="1"/>
</dbReference>
<dbReference type="Pfam" id="PF00464">
    <property type="entry name" value="SHMT"/>
    <property type="match status" value="1"/>
</dbReference>
<dbReference type="PIRSF" id="PIRSF000412">
    <property type="entry name" value="SHMT"/>
    <property type="match status" value="1"/>
</dbReference>
<dbReference type="SUPFAM" id="SSF53383">
    <property type="entry name" value="PLP-dependent transferases"/>
    <property type="match status" value="1"/>
</dbReference>
<dbReference type="PROSITE" id="PS00096">
    <property type="entry name" value="SHMT"/>
    <property type="match status" value="1"/>
</dbReference>
<accession>A0L403</accession>
<sequence>MNTADLKSFDPEVQSAIDEELGRQRHQIELIASENIVSPAVMAAQGSVMTNKYAEGYPAKRYYGGCEFVDKVEVLAIERAKQLFGCAYANVQPHSGSQANMAAFMAIAPAGSTILGMSLAHGGHLTHGAKVNFSGQIYNAVQYGLNGESERIDFDQVQALAMEHKPAIIVAGASAYSRIIDFAKFREICDAVGAKLVVDMAHFAGLVATGEHPSPFPHADIVTTTTHKTLRGPRGGMILTNDEELAKKINSKIFPGIQGGPLMHVIAAKAVAFKEALSPEFKIYTQQVRKNAVALAEVLVEGGLRIVSGGTDNHLMLVDLTSRDITGKDTEHALERAGLTCNKNAIPNDPRSPFITSGVRLGTPAATTRGFDEEAFRAVGRLIVRVVDAVAASGGAGDPAIEAEVHKEVDALCQKFPIYADI</sequence>